<evidence type="ECO:0000255" key="1">
    <source>
        <dbReference type="HAMAP-Rule" id="MF_00089"/>
    </source>
</evidence>
<organism>
    <name type="scientific">Salmonella typhi</name>
    <dbReference type="NCBI Taxonomy" id="90370"/>
    <lineage>
        <taxon>Bacteria</taxon>
        <taxon>Pseudomonadati</taxon>
        <taxon>Pseudomonadota</taxon>
        <taxon>Gammaproteobacteria</taxon>
        <taxon>Enterobacterales</taxon>
        <taxon>Enterobacteriaceae</taxon>
        <taxon>Salmonella</taxon>
    </lineage>
</organism>
<gene>
    <name evidence="1" type="primary">thiC</name>
    <name type="ordered locus">STY3721</name>
    <name type="ordered locus">t3467</name>
</gene>
<sequence length="631" mass="70802">MSTTTLTRREQRAKAQHFIDTLEGTAFPNSKRIYVTGSQHDIRVPMREIQLSPTLIGGSKDNPQFEENEAVPVYDTSGPYGDPEVAINVQQGLAKLRQPWIDARNDSEELDDRSSAYTRERLADDGLDDLRFTGLLTPKRAKAGKRVTQLHYARQGIVTPEMEFIAIRENMGRERIRSEVLRHQHPGMNFGARLPENITPEFVRDEVAAGRAIIPANINHPESEPMIIGRNFLVKVNANIGNSAVTSSIEEEVEKLVWSTRWGADTVMDLSTGRYIHETREWILRNSPVPIGTVPIYQALEKVNGIAEDLTWEAFRDTLLEQAEQGVDYFTIHAGVLLRYVPMTAKRLTGIVSRGGSIMAKWCLSHHKENFLFEHFREICEICSAYDVSLSLGDGLRPGSIQDANDEAQFSELHTLGELTNIAWEYDVQVMIEGPGHVPMHMIQRNMTEELESCHEAPFYTLGPLTTDIAPGYDHFTSGIGAAMIGWFGCAMLCYVTPKEHLGLPNKEDVKQGLITYKIAAHAADLAKGHPGAQIRDNAMSKARFEFRWEDQFNLALDPFTARAYHDETLPQESGKVAHFCSMCGPKFCSMKISQEVRDYAAAQAIEVGMADMSENFRAKGGEIYLKREEA</sequence>
<feature type="chain" id="PRO_0000152834" description="Phosphomethylpyrimidine synthase">
    <location>
        <begin position="1"/>
        <end position="631"/>
    </location>
</feature>
<feature type="binding site" evidence="1">
    <location>
        <position position="239"/>
    </location>
    <ligand>
        <name>substrate</name>
    </ligand>
</feature>
<feature type="binding site" evidence="1">
    <location>
        <position position="268"/>
    </location>
    <ligand>
        <name>substrate</name>
    </ligand>
</feature>
<feature type="binding site" evidence="1">
    <location>
        <position position="297"/>
    </location>
    <ligand>
        <name>substrate</name>
    </ligand>
</feature>
<feature type="binding site" evidence="1">
    <location>
        <position position="333"/>
    </location>
    <ligand>
        <name>substrate</name>
    </ligand>
</feature>
<feature type="binding site" evidence="1">
    <location>
        <begin position="353"/>
        <end position="355"/>
    </location>
    <ligand>
        <name>substrate</name>
    </ligand>
</feature>
<feature type="binding site" evidence="1">
    <location>
        <begin position="394"/>
        <end position="397"/>
    </location>
    <ligand>
        <name>substrate</name>
    </ligand>
</feature>
<feature type="binding site" evidence="1">
    <location>
        <position position="433"/>
    </location>
    <ligand>
        <name>substrate</name>
    </ligand>
</feature>
<feature type="binding site" evidence="1">
    <location>
        <position position="437"/>
    </location>
    <ligand>
        <name>Zn(2+)</name>
        <dbReference type="ChEBI" id="CHEBI:29105"/>
    </ligand>
</feature>
<feature type="binding site" evidence="1">
    <location>
        <position position="460"/>
    </location>
    <ligand>
        <name>substrate</name>
    </ligand>
</feature>
<feature type="binding site" evidence="1">
    <location>
        <position position="501"/>
    </location>
    <ligand>
        <name>Zn(2+)</name>
        <dbReference type="ChEBI" id="CHEBI:29105"/>
    </ligand>
</feature>
<feature type="binding site" evidence="1">
    <location>
        <position position="581"/>
    </location>
    <ligand>
        <name>[4Fe-4S] cluster</name>
        <dbReference type="ChEBI" id="CHEBI:49883"/>
        <note>4Fe-4S-S-AdoMet</note>
    </ligand>
</feature>
<feature type="binding site" evidence="1">
    <location>
        <position position="584"/>
    </location>
    <ligand>
        <name>[4Fe-4S] cluster</name>
        <dbReference type="ChEBI" id="CHEBI:49883"/>
        <note>4Fe-4S-S-AdoMet</note>
    </ligand>
</feature>
<feature type="binding site" evidence="1">
    <location>
        <position position="589"/>
    </location>
    <ligand>
        <name>[4Fe-4S] cluster</name>
        <dbReference type="ChEBI" id="CHEBI:49883"/>
        <note>4Fe-4S-S-AdoMet</note>
    </ligand>
</feature>
<dbReference type="EC" id="4.1.99.17" evidence="1"/>
<dbReference type="EMBL" id="AL513382">
    <property type="protein sequence ID" value="CAD09480.1"/>
    <property type="molecule type" value="Genomic_DNA"/>
</dbReference>
<dbReference type="EMBL" id="AE014613">
    <property type="protein sequence ID" value="AAO70983.1"/>
    <property type="molecule type" value="Genomic_DNA"/>
</dbReference>
<dbReference type="RefSeq" id="NP_457910.1">
    <property type="nucleotide sequence ID" value="NC_003198.1"/>
</dbReference>
<dbReference type="RefSeq" id="WP_000108425.1">
    <property type="nucleotide sequence ID" value="NZ_WSUR01000043.1"/>
</dbReference>
<dbReference type="SMR" id="Q8Z326"/>
<dbReference type="STRING" id="220341.gene:17587581"/>
<dbReference type="KEGG" id="stt:t3467"/>
<dbReference type="KEGG" id="sty:STY3721"/>
<dbReference type="PATRIC" id="fig|220341.7.peg.3793"/>
<dbReference type="eggNOG" id="COG0422">
    <property type="taxonomic scope" value="Bacteria"/>
</dbReference>
<dbReference type="HOGENOM" id="CLU_013181_2_1_6"/>
<dbReference type="OMA" id="FDWNKQF"/>
<dbReference type="OrthoDB" id="9805897at2"/>
<dbReference type="UniPathway" id="UPA00060"/>
<dbReference type="Proteomes" id="UP000000541">
    <property type="component" value="Chromosome"/>
</dbReference>
<dbReference type="Proteomes" id="UP000002670">
    <property type="component" value="Chromosome"/>
</dbReference>
<dbReference type="GO" id="GO:0005829">
    <property type="term" value="C:cytosol"/>
    <property type="evidence" value="ECO:0007669"/>
    <property type="project" value="TreeGrafter"/>
</dbReference>
<dbReference type="GO" id="GO:0051539">
    <property type="term" value="F:4 iron, 4 sulfur cluster binding"/>
    <property type="evidence" value="ECO:0007669"/>
    <property type="project" value="UniProtKB-KW"/>
</dbReference>
<dbReference type="GO" id="GO:0016830">
    <property type="term" value="F:carbon-carbon lyase activity"/>
    <property type="evidence" value="ECO:0007669"/>
    <property type="project" value="InterPro"/>
</dbReference>
<dbReference type="GO" id="GO:0008270">
    <property type="term" value="F:zinc ion binding"/>
    <property type="evidence" value="ECO:0007669"/>
    <property type="project" value="UniProtKB-UniRule"/>
</dbReference>
<dbReference type="GO" id="GO:0009228">
    <property type="term" value="P:thiamine biosynthetic process"/>
    <property type="evidence" value="ECO:0007669"/>
    <property type="project" value="UniProtKB-KW"/>
</dbReference>
<dbReference type="GO" id="GO:0009229">
    <property type="term" value="P:thiamine diphosphate biosynthetic process"/>
    <property type="evidence" value="ECO:0007669"/>
    <property type="project" value="UniProtKB-UniRule"/>
</dbReference>
<dbReference type="FunFam" id="3.20.20.540:FF:000001">
    <property type="entry name" value="Phosphomethylpyrimidine synthase"/>
    <property type="match status" value="1"/>
</dbReference>
<dbReference type="Gene3D" id="6.10.250.620">
    <property type="match status" value="1"/>
</dbReference>
<dbReference type="Gene3D" id="3.20.20.540">
    <property type="entry name" value="Radical SAM ThiC family, central domain"/>
    <property type="match status" value="1"/>
</dbReference>
<dbReference type="HAMAP" id="MF_00089">
    <property type="entry name" value="ThiC"/>
    <property type="match status" value="1"/>
</dbReference>
<dbReference type="InterPro" id="IPR037509">
    <property type="entry name" value="ThiC"/>
</dbReference>
<dbReference type="InterPro" id="IPR025747">
    <property type="entry name" value="ThiC-associated_dom"/>
</dbReference>
<dbReference type="InterPro" id="IPR038521">
    <property type="entry name" value="ThiC/Bza_core_dom"/>
</dbReference>
<dbReference type="InterPro" id="IPR002817">
    <property type="entry name" value="ThiC/BzaA/B"/>
</dbReference>
<dbReference type="NCBIfam" id="NF006763">
    <property type="entry name" value="PRK09284.1"/>
    <property type="match status" value="1"/>
</dbReference>
<dbReference type="NCBIfam" id="NF009895">
    <property type="entry name" value="PRK13352.1"/>
    <property type="match status" value="1"/>
</dbReference>
<dbReference type="NCBIfam" id="TIGR00190">
    <property type="entry name" value="thiC"/>
    <property type="match status" value="1"/>
</dbReference>
<dbReference type="PANTHER" id="PTHR30557:SF1">
    <property type="entry name" value="PHOSPHOMETHYLPYRIMIDINE SYNTHASE, CHLOROPLASTIC"/>
    <property type="match status" value="1"/>
</dbReference>
<dbReference type="PANTHER" id="PTHR30557">
    <property type="entry name" value="THIAMINE BIOSYNTHESIS PROTEIN THIC"/>
    <property type="match status" value="1"/>
</dbReference>
<dbReference type="Pfam" id="PF13667">
    <property type="entry name" value="ThiC-associated"/>
    <property type="match status" value="1"/>
</dbReference>
<dbReference type="Pfam" id="PF01964">
    <property type="entry name" value="ThiC_Rad_SAM"/>
    <property type="match status" value="1"/>
</dbReference>
<dbReference type="SFLD" id="SFLDF00407">
    <property type="entry name" value="phosphomethylpyrimidine_syntha"/>
    <property type="match status" value="1"/>
</dbReference>
<dbReference type="SFLD" id="SFLDG01114">
    <property type="entry name" value="phosphomethylpyrimidine_syntha"/>
    <property type="match status" value="1"/>
</dbReference>
<dbReference type="SFLD" id="SFLDS00113">
    <property type="entry name" value="Radical_SAM_Phosphomethylpyrim"/>
    <property type="match status" value="1"/>
</dbReference>
<keyword id="KW-0004">4Fe-4S</keyword>
<keyword id="KW-0408">Iron</keyword>
<keyword id="KW-0411">Iron-sulfur</keyword>
<keyword id="KW-0456">Lyase</keyword>
<keyword id="KW-0479">Metal-binding</keyword>
<keyword id="KW-0949">S-adenosyl-L-methionine</keyword>
<keyword id="KW-0784">Thiamine biosynthesis</keyword>
<keyword id="KW-0862">Zinc</keyword>
<proteinExistence type="inferred from homology"/>
<comment type="function">
    <text evidence="1">Catalyzes the synthesis of the hydroxymethylpyrimidine phosphate (HMP-P) moiety of thiamine from aminoimidazole ribotide (AIR) in a radical S-adenosyl-L-methionine (SAM)-dependent reaction.</text>
</comment>
<comment type="catalytic activity">
    <reaction evidence="1">
        <text>5-amino-1-(5-phospho-beta-D-ribosyl)imidazole + S-adenosyl-L-methionine = 4-amino-2-methyl-5-(phosphooxymethyl)pyrimidine + CO + 5'-deoxyadenosine + formate + L-methionine + 3 H(+)</text>
        <dbReference type="Rhea" id="RHEA:24840"/>
        <dbReference type="ChEBI" id="CHEBI:15378"/>
        <dbReference type="ChEBI" id="CHEBI:15740"/>
        <dbReference type="ChEBI" id="CHEBI:17245"/>
        <dbReference type="ChEBI" id="CHEBI:17319"/>
        <dbReference type="ChEBI" id="CHEBI:57844"/>
        <dbReference type="ChEBI" id="CHEBI:58354"/>
        <dbReference type="ChEBI" id="CHEBI:59789"/>
        <dbReference type="ChEBI" id="CHEBI:137981"/>
        <dbReference type="EC" id="4.1.99.17"/>
    </reaction>
</comment>
<comment type="cofactor">
    <cofactor evidence="1">
        <name>[4Fe-4S] cluster</name>
        <dbReference type="ChEBI" id="CHEBI:49883"/>
    </cofactor>
    <text evidence="1">Binds 1 [4Fe-4S] cluster per subunit. The cluster is coordinated with 3 cysteines and an exchangeable S-adenosyl-L-methionine.</text>
</comment>
<comment type="pathway">
    <text evidence="1">Cofactor biosynthesis; thiamine diphosphate biosynthesis.</text>
</comment>
<comment type="subunit">
    <text evidence="1">Homodimer.</text>
</comment>
<comment type="similarity">
    <text evidence="1">Belongs to the ThiC family.</text>
</comment>
<reference key="1">
    <citation type="journal article" date="2001" name="Nature">
        <title>Complete genome sequence of a multiple drug resistant Salmonella enterica serovar Typhi CT18.</title>
        <authorList>
            <person name="Parkhill J."/>
            <person name="Dougan G."/>
            <person name="James K.D."/>
            <person name="Thomson N.R."/>
            <person name="Pickard D."/>
            <person name="Wain J."/>
            <person name="Churcher C.M."/>
            <person name="Mungall K.L."/>
            <person name="Bentley S.D."/>
            <person name="Holden M.T.G."/>
            <person name="Sebaihia M."/>
            <person name="Baker S."/>
            <person name="Basham D."/>
            <person name="Brooks K."/>
            <person name="Chillingworth T."/>
            <person name="Connerton P."/>
            <person name="Cronin A."/>
            <person name="Davis P."/>
            <person name="Davies R.M."/>
            <person name="Dowd L."/>
            <person name="White N."/>
            <person name="Farrar J."/>
            <person name="Feltwell T."/>
            <person name="Hamlin N."/>
            <person name="Haque A."/>
            <person name="Hien T.T."/>
            <person name="Holroyd S."/>
            <person name="Jagels K."/>
            <person name="Krogh A."/>
            <person name="Larsen T.S."/>
            <person name="Leather S."/>
            <person name="Moule S."/>
            <person name="O'Gaora P."/>
            <person name="Parry C."/>
            <person name="Quail M.A."/>
            <person name="Rutherford K.M."/>
            <person name="Simmonds M."/>
            <person name="Skelton J."/>
            <person name="Stevens K."/>
            <person name="Whitehead S."/>
            <person name="Barrell B.G."/>
        </authorList>
    </citation>
    <scope>NUCLEOTIDE SEQUENCE [LARGE SCALE GENOMIC DNA]</scope>
    <source>
        <strain>CT18</strain>
    </source>
</reference>
<reference key="2">
    <citation type="journal article" date="2003" name="J. Bacteriol.">
        <title>Comparative genomics of Salmonella enterica serovar Typhi strains Ty2 and CT18.</title>
        <authorList>
            <person name="Deng W."/>
            <person name="Liou S.-R."/>
            <person name="Plunkett G. III"/>
            <person name="Mayhew G.F."/>
            <person name="Rose D.J."/>
            <person name="Burland V."/>
            <person name="Kodoyianni V."/>
            <person name="Schwartz D.C."/>
            <person name="Blattner F.R."/>
        </authorList>
    </citation>
    <scope>NUCLEOTIDE SEQUENCE [LARGE SCALE GENOMIC DNA]</scope>
    <source>
        <strain>ATCC 700931 / Ty2</strain>
    </source>
</reference>
<protein>
    <recommendedName>
        <fullName evidence="1">Phosphomethylpyrimidine synthase</fullName>
        <ecNumber evidence="1">4.1.99.17</ecNumber>
    </recommendedName>
    <alternativeName>
        <fullName evidence="1">Hydroxymethylpyrimidine phosphate synthase</fullName>
        <shortName evidence="1">HMP-P synthase</shortName>
        <shortName evidence="1">HMP-phosphate synthase</shortName>
        <shortName evidence="1">HMPP synthase</shortName>
    </alternativeName>
    <alternativeName>
        <fullName evidence="1">Thiamine biosynthesis protein ThiC</fullName>
    </alternativeName>
</protein>
<accession>Q8Z326</accession>
<name>THIC_SALTI</name>